<accession>C5A1D5</accession>
<organism>
    <name type="scientific">Escherichia coli (strain K12 / MC4100 / BW2952)</name>
    <dbReference type="NCBI Taxonomy" id="595496"/>
    <lineage>
        <taxon>Bacteria</taxon>
        <taxon>Pseudomonadati</taxon>
        <taxon>Pseudomonadota</taxon>
        <taxon>Gammaproteobacteria</taxon>
        <taxon>Enterobacterales</taxon>
        <taxon>Enterobacteriaceae</taxon>
        <taxon>Escherichia</taxon>
    </lineage>
</organism>
<gene>
    <name evidence="1" type="primary">groEL</name>
    <name evidence="1" type="synonym">groL</name>
    <name type="ordered locus">BWG_3856</name>
</gene>
<evidence type="ECO:0000255" key="1">
    <source>
        <dbReference type="HAMAP-Rule" id="MF_00600"/>
    </source>
</evidence>
<keyword id="KW-0067">ATP-binding</keyword>
<keyword id="KW-0143">Chaperone</keyword>
<keyword id="KW-0963">Cytoplasm</keyword>
<keyword id="KW-0413">Isomerase</keyword>
<keyword id="KW-0547">Nucleotide-binding</keyword>
<proteinExistence type="evidence at protein level"/>
<feature type="chain" id="PRO_1000212195" description="Chaperonin GroEL">
    <location>
        <begin position="1"/>
        <end position="548"/>
    </location>
</feature>
<feature type="binding site" evidence="1">
    <location>
        <begin position="30"/>
        <end position="33"/>
    </location>
    <ligand>
        <name>ATP</name>
        <dbReference type="ChEBI" id="CHEBI:30616"/>
    </ligand>
</feature>
<feature type="binding site" evidence="1">
    <location>
        <position position="51"/>
    </location>
    <ligand>
        <name>ATP</name>
        <dbReference type="ChEBI" id="CHEBI:30616"/>
    </ligand>
</feature>
<feature type="binding site" evidence="1">
    <location>
        <begin position="87"/>
        <end position="91"/>
    </location>
    <ligand>
        <name>ATP</name>
        <dbReference type="ChEBI" id="CHEBI:30616"/>
    </ligand>
</feature>
<feature type="binding site" evidence="1">
    <location>
        <position position="415"/>
    </location>
    <ligand>
        <name>ATP</name>
        <dbReference type="ChEBI" id="CHEBI:30616"/>
    </ligand>
</feature>
<feature type="binding site" evidence="1">
    <location>
        <begin position="479"/>
        <end position="481"/>
    </location>
    <ligand>
        <name>ATP</name>
        <dbReference type="ChEBI" id="CHEBI:30616"/>
    </ligand>
</feature>
<feature type="binding site" evidence="1">
    <location>
        <position position="495"/>
    </location>
    <ligand>
        <name>ATP</name>
        <dbReference type="ChEBI" id="CHEBI:30616"/>
    </ligand>
</feature>
<dbReference type="EC" id="5.6.1.7" evidence="1"/>
<dbReference type="EMBL" id="CP001396">
    <property type="protein sequence ID" value="ACR62650.1"/>
    <property type="molecule type" value="Genomic_DNA"/>
</dbReference>
<dbReference type="RefSeq" id="WP_000729117.1">
    <property type="nucleotide sequence ID" value="NC_012759.1"/>
</dbReference>
<dbReference type="SMR" id="C5A1D5"/>
<dbReference type="IntAct" id="C5A1D5">
    <property type="interactions" value="1"/>
</dbReference>
<dbReference type="GeneID" id="93777681"/>
<dbReference type="KEGG" id="ebw:BWG_3856"/>
<dbReference type="HOGENOM" id="CLU_016503_3_0_6"/>
<dbReference type="GO" id="GO:0005737">
    <property type="term" value="C:cytoplasm"/>
    <property type="evidence" value="ECO:0007669"/>
    <property type="project" value="UniProtKB-SubCell"/>
</dbReference>
<dbReference type="GO" id="GO:0005524">
    <property type="term" value="F:ATP binding"/>
    <property type="evidence" value="ECO:0007669"/>
    <property type="project" value="UniProtKB-UniRule"/>
</dbReference>
<dbReference type="GO" id="GO:0140662">
    <property type="term" value="F:ATP-dependent protein folding chaperone"/>
    <property type="evidence" value="ECO:0007669"/>
    <property type="project" value="InterPro"/>
</dbReference>
<dbReference type="GO" id="GO:0016853">
    <property type="term" value="F:isomerase activity"/>
    <property type="evidence" value="ECO:0007669"/>
    <property type="project" value="UniProtKB-KW"/>
</dbReference>
<dbReference type="GO" id="GO:0051082">
    <property type="term" value="F:unfolded protein binding"/>
    <property type="evidence" value="ECO:0007669"/>
    <property type="project" value="UniProtKB-UniRule"/>
</dbReference>
<dbReference type="GO" id="GO:0042026">
    <property type="term" value="P:protein refolding"/>
    <property type="evidence" value="ECO:0007669"/>
    <property type="project" value="UniProtKB-UniRule"/>
</dbReference>
<dbReference type="CDD" id="cd03344">
    <property type="entry name" value="GroEL"/>
    <property type="match status" value="1"/>
</dbReference>
<dbReference type="FunFam" id="1.10.560.10:FF:000001">
    <property type="entry name" value="60 kDa chaperonin"/>
    <property type="match status" value="1"/>
</dbReference>
<dbReference type="FunFam" id="3.50.7.10:FF:000001">
    <property type="entry name" value="60 kDa chaperonin"/>
    <property type="match status" value="1"/>
</dbReference>
<dbReference type="Gene3D" id="3.50.7.10">
    <property type="entry name" value="GroEL"/>
    <property type="match status" value="1"/>
</dbReference>
<dbReference type="Gene3D" id="1.10.560.10">
    <property type="entry name" value="GroEL-like equatorial domain"/>
    <property type="match status" value="1"/>
</dbReference>
<dbReference type="Gene3D" id="3.30.260.10">
    <property type="entry name" value="TCP-1-like chaperonin intermediate domain"/>
    <property type="match status" value="1"/>
</dbReference>
<dbReference type="HAMAP" id="MF_00600">
    <property type="entry name" value="CH60"/>
    <property type="match status" value="1"/>
</dbReference>
<dbReference type="InterPro" id="IPR018370">
    <property type="entry name" value="Chaperonin_Cpn60_CS"/>
</dbReference>
<dbReference type="InterPro" id="IPR001844">
    <property type="entry name" value="Cpn60/GroEL"/>
</dbReference>
<dbReference type="InterPro" id="IPR002423">
    <property type="entry name" value="Cpn60/GroEL/TCP-1"/>
</dbReference>
<dbReference type="InterPro" id="IPR027409">
    <property type="entry name" value="GroEL-like_apical_dom_sf"/>
</dbReference>
<dbReference type="InterPro" id="IPR027413">
    <property type="entry name" value="GROEL-like_equatorial_sf"/>
</dbReference>
<dbReference type="InterPro" id="IPR027410">
    <property type="entry name" value="TCP-1-like_intermed_sf"/>
</dbReference>
<dbReference type="NCBIfam" id="TIGR02348">
    <property type="entry name" value="GroEL"/>
    <property type="match status" value="1"/>
</dbReference>
<dbReference type="NCBIfam" id="NF000592">
    <property type="entry name" value="PRK00013.1"/>
    <property type="match status" value="1"/>
</dbReference>
<dbReference type="NCBIfam" id="NF009487">
    <property type="entry name" value="PRK12849.1"/>
    <property type="match status" value="1"/>
</dbReference>
<dbReference type="NCBIfam" id="NF009488">
    <property type="entry name" value="PRK12850.1"/>
    <property type="match status" value="1"/>
</dbReference>
<dbReference type="NCBIfam" id="NF009489">
    <property type="entry name" value="PRK12851.1"/>
    <property type="match status" value="1"/>
</dbReference>
<dbReference type="PANTHER" id="PTHR45633">
    <property type="entry name" value="60 KDA HEAT SHOCK PROTEIN, MITOCHONDRIAL"/>
    <property type="match status" value="1"/>
</dbReference>
<dbReference type="Pfam" id="PF00118">
    <property type="entry name" value="Cpn60_TCP1"/>
    <property type="match status" value="1"/>
</dbReference>
<dbReference type="PRINTS" id="PR00298">
    <property type="entry name" value="CHAPERONIN60"/>
</dbReference>
<dbReference type="SUPFAM" id="SSF52029">
    <property type="entry name" value="GroEL apical domain-like"/>
    <property type="match status" value="1"/>
</dbReference>
<dbReference type="SUPFAM" id="SSF48592">
    <property type="entry name" value="GroEL equatorial domain-like"/>
    <property type="match status" value="1"/>
</dbReference>
<dbReference type="SUPFAM" id="SSF54849">
    <property type="entry name" value="GroEL-intermediate domain like"/>
    <property type="match status" value="1"/>
</dbReference>
<dbReference type="PROSITE" id="PS00296">
    <property type="entry name" value="CHAPERONINS_CPN60"/>
    <property type="match status" value="1"/>
</dbReference>
<comment type="function">
    <text evidence="1">Together with its co-chaperonin GroES, plays an essential role in assisting protein folding. The GroEL-GroES system forms a nano-cage that allows encapsulation of the non-native substrate proteins and provides a physical environment optimized to promote and accelerate protein folding.</text>
</comment>
<comment type="catalytic activity">
    <reaction evidence="1">
        <text>ATP + H2O + a folded polypeptide = ADP + phosphate + an unfolded polypeptide.</text>
        <dbReference type="EC" id="5.6.1.7"/>
    </reaction>
</comment>
<comment type="subunit">
    <text evidence="1">Forms a cylinder of 14 subunits composed of two heptameric rings stacked back-to-back. Interacts with the co-chaperonin GroES.</text>
</comment>
<comment type="interaction">
    <interactant intactId="EBI-4406290">
        <id>C5A1D5</id>
    </interactant>
    <interactant intactId="EBI-4406374">
        <id>P69853</id>
        <label>dmsD</label>
    </interactant>
    <organismsDiffer>true</organismsDiffer>
    <experiments>5</experiments>
</comment>
<comment type="subcellular location">
    <subcellularLocation>
        <location evidence="1">Cytoplasm</location>
    </subcellularLocation>
</comment>
<comment type="similarity">
    <text evidence="1">Belongs to the chaperonin (HSP60) family.</text>
</comment>
<reference key="1">
    <citation type="journal article" date="2009" name="J. Bacteriol.">
        <title>Genomic sequencing reveals regulatory mutations and recombinational events in the widely used MC4100 lineage of Escherichia coli K-12.</title>
        <authorList>
            <person name="Ferenci T."/>
            <person name="Zhou Z."/>
            <person name="Betteridge T."/>
            <person name="Ren Y."/>
            <person name="Liu Y."/>
            <person name="Feng L."/>
            <person name="Reeves P.R."/>
            <person name="Wang L."/>
        </authorList>
    </citation>
    <scope>NUCLEOTIDE SEQUENCE [LARGE SCALE GENOMIC DNA]</scope>
    <source>
        <strain>K12 / MC4100 / BW2952</strain>
    </source>
</reference>
<name>CH60_ECOBW</name>
<protein>
    <recommendedName>
        <fullName evidence="1">Chaperonin GroEL</fullName>
        <ecNumber evidence="1">5.6.1.7</ecNumber>
    </recommendedName>
    <alternativeName>
        <fullName evidence="1">60 kDa chaperonin</fullName>
    </alternativeName>
    <alternativeName>
        <fullName evidence="1">Chaperonin-60</fullName>
        <shortName evidence="1">Cpn60</shortName>
    </alternativeName>
</protein>
<sequence length="548" mass="57329">MAAKDVKFGNDARVKMLRGVNVLADAVKVTLGPKGRNVVLDKSFGAPTITKDGVSVAREIELEDKFENMGAQMVKEVASKANDAAGDGTTTATVLAQAIITEGLKAVAAGMNPMDLKRGIDKAVTAAVEELKALSVPCSDSKAIAQVGTISANSDETVGKLIAEAMDKVGKEGVITVEDGTGLQDELDVVEGMQFDRGYLSPYFINKPETGAVELESPFILLADKKISNIREMLPVLEAVAKAGKPLLIIAEDVEGEALATLVVNTMRGIVKVAAVKAPGFGDRRKAMLQDIATLTGGTVISEEIGMELEKATLEDLGQAKRVVINKDTTTIIDGVGEEAAIQGRVAQIRQQIEEATSDYDREKLQERVAKLAGGVAVIKVGAATEVEMKEKKARVEDALHATRAAVEEGVVAGGGVALIRVASKLADLRGQNEDQNVGIKVALRAMEAPLRQIVLNCGEEPSVVANTVKGGDGNYGYNAATEEYGNMIDMGILDPTKVTRSALQYAASVAGLMITTECMVTDLPKNDAADLGAAGGMGGMGGMGGMM</sequence>